<name>RS12_LEPCP</name>
<gene>
    <name evidence="2" type="primary">rpsL</name>
    <name type="ordered locus">Lcho_3861</name>
</gene>
<organism>
    <name type="scientific">Leptothrix cholodnii (strain ATCC 51168 / LMG 8142 / SP-6)</name>
    <name type="common">Leptothrix discophora (strain SP-6)</name>
    <dbReference type="NCBI Taxonomy" id="395495"/>
    <lineage>
        <taxon>Bacteria</taxon>
        <taxon>Pseudomonadati</taxon>
        <taxon>Pseudomonadota</taxon>
        <taxon>Betaproteobacteria</taxon>
        <taxon>Burkholderiales</taxon>
        <taxon>Sphaerotilaceae</taxon>
        <taxon>Leptothrix</taxon>
    </lineage>
</organism>
<accession>B1Y7G7</accession>
<evidence type="ECO:0000250" key="1"/>
<evidence type="ECO:0000255" key="2">
    <source>
        <dbReference type="HAMAP-Rule" id="MF_00403"/>
    </source>
</evidence>
<evidence type="ECO:0000256" key="3">
    <source>
        <dbReference type="SAM" id="MobiDB-lite"/>
    </source>
</evidence>
<evidence type="ECO:0000305" key="4"/>
<sequence length="125" mass="13994">MPTINQLVRQGREVEVTKSKSPAMQNCPQRRGVCTRVYTTTPKKPNSALRKVAKVRLTNGFEVISYIGGEGHNLQEHSVVLVRGGRVKDLPGVRYHIVRGSLDLQGVKDRKQSRSKYGSKRPKKA</sequence>
<dbReference type="EMBL" id="CP001013">
    <property type="protein sequence ID" value="ACB36115.1"/>
    <property type="molecule type" value="Genomic_DNA"/>
</dbReference>
<dbReference type="RefSeq" id="WP_012348862.1">
    <property type="nucleotide sequence ID" value="NC_010524.1"/>
</dbReference>
<dbReference type="SMR" id="B1Y7G7"/>
<dbReference type="STRING" id="395495.Lcho_3861"/>
<dbReference type="KEGG" id="lch:Lcho_3861"/>
<dbReference type="eggNOG" id="COG0048">
    <property type="taxonomic scope" value="Bacteria"/>
</dbReference>
<dbReference type="HOGENOM" id="CLU_104295_1_2_4"/>
<dbReference type="OrthoDB" id="9802366at2"/>
<dbReference type="Proteomes" id="UP000001693">
    <property type="component" value="Chromosome"/>
</dbReference>
<dbReference type="GO" id="GO:0015935">
    <property type="term" value="C:small ribosomal subunit"/>
    <property type="evidence" value="ECO:0007669"/>
    <property type="project" value="InterPro"/>
</dbReference>
<dbReference type="GO" id="GO:0019843">
    <property type="term" value="F:rRNA binding"/>
    <property type="evidence" value="ECO:0007669"/>
    <property type="project" value="UniProtKB-UniRule"/>
</dbReference>
<dbReference type="GO" id="GO:0003735">
    <property type="term" value="F:structural constituent of ribosome"/>
    <property type="evidence" value="ECO:0007669"/>
    <property type="project" value="InterPro"/>
</dbReference>
<dbReference type="GO" id="GO:0000049">
    <property type="term" value="F:tRNA binding"/>
    <property type="evidence" value="ECO:0007669"/>
    <property type="project" value="UniProtKB-UniRule"/>
</dbReference>
<dbReference type="GO" id="GO:0006412">
    <property type="term" value="P:translation"/>
    <property type="evidence" value="ECO:0007669"/>
    <property type="project" value="UniProtKB-UniRule"/>
</dbReference>
<dbReference type="CDD" id="cd03368">
    <property type="entry name" value="Ribosomal_S12"/>
    <property type="match status" value="1"/>
</dbReference>
<dbReference type="FunFam" id="2.40.50.140:FF:000001">
    <property type="entry name" value="30S ribosomal protein S12"/>
    <property type="match status" value="1"/>
</dbReference>
<dbReference type="Gene3D" id="2.40.50.140">
    <property type="entry name" value="Nucleic acid-binding proteins"/>
    <property type="match status" value="1"/>
</dbReference>
<dbReference type="HAMAP" id="MF_00403_B">
    <property type="entry name" value="Ribosomal_uS12_B"/>
    <property type="match status" value="1"/>
</dbReference>
<dbReference type="InterPro" id="IPR012340">
    <property type="entry name" value="NA-bd_OB-fold"/>
</dbReference>
<dbReference type="InterPro" id="IPR006032">
    <property type="entry name" value="Ribosomal_uS12"/>
</dbReference>
<dbReference type="InterPro" id="IPR005679">
    <property type="entry name" value="Ribosomal_uS12_bac"/>
</dbReference>
<dbReference type="NCBIfam" id="TIGR00981">
    <property type="entry name" value="rpsL_bact"/>
    <property type="match status" value="1"/>
</dbReference>
<dbReference type="PANTHER" id="PTHR11652">
    <property type="entry name" value="30S RIBOSOMAL PROTEIN S12 FAMILY MEMBER"/>
    <property type="match status" value="1"/>
</dbReference>
<dbReference type="Pfam" id="PF00164">
    <property type="entry name" value="Ribosom_S12_S23"/>
    <property type="match status" value="1"/>
</dbReference>
<dbReference type="PIRSF" id="PIRSF002133">
    <property type="entry name" value="Ribosomal_S12/S23"/>
    <property type="match status" value="1"/>
</dbReference>
<dbReference type="PRINTS" id="PR01034">
    <property type="entry name" value="RIBOSOMALS12"/>
</dbReference>
<dbReference type="SUPFAM" id="SSF50249">
    <property type="entry name" value="Nucleic acid-binding proteins"/>
    <property type="match status" value="1"/>
</dbReference>
<dbReference type="PROSITE" id="PS00055">
    <property type="entry name" value="RIBOSOMAL_S12"/>
    <property type="match status" value="1"/>
</dbReference>
<comment type="function">
    <text evidence="2">With S4 and S5 plays an important role in translational accuracy.</text>
</comment>
<comment type="function">
    <text evidence="2">Interacts with and stabilizes bases of the 16S rRNA that are involved in tRNA selection in the A site and with the mRNA backbone. Located at the interface of the 30S and 50S subunits, it traverses the body of the 30S subunit contacting proteins on the other side and probably holding the rRNA structure together. The combined cluster of proteins S8, S12 and S17 appears to hold together the shoulder and platform of the 30S subunit.</text>
</comment>
<comment type="subunit">
    <text evidence="2">Part of the 30S ribosomal subunit. Contacts proteins S8 and S17. May interact with IF1 in the 30S initiation complex.</text>
</comment>
<comment type="similarity">
    <text evidence="2">Belongs to the universal ribosomal protein uS12 family.</text>
</comment>
<protein>
    <recommendedName>
        <fullName evidence="2">Small ribosomal subunit protein uS12</fullName>
    </recommendedName>
    <alternativeName>
        <fullName evidence="4">30S ribosomal protein S12</fullName>
    </alternativeName>
</protein>
<reference key="1">
    <citation type="submission" date="2008-03" db="EMBL/GenBank/DDBJ databases">
        <title>Complete sequence of Leptothrix cholodnii SP-6.</title>
        <authorList>
            <consortium name="US DOE Joint Genome Institute"/>
            <person name="Copeland A."/>
            <person name="Lucas S."/>
            <person name="Lapidus A."/>
            <person name="Glavina del Rio T."/>
            <person name="Dalin E."/>
            <person name="Tice H."/>
            <person name="Bruce D."/>
            <person name="Goodwin L."/>
            <person name="Pitluck S."/>
            <person name="Chertkov O."/>
            <person name="Brettin T."/>
            <person name="Detter J.C."/>
            <person name="Han C."/>
            <person name="Kuske C.R."/>
            <person name="Schmutz J."/>
            <person name="Larimer F."/>
            <person name="Land M."/>
            <person name="Hauser L."/>
            <person name="Kyrpides N."/>
            <person name="Lykidis A."/>
            <person name="Emerson D."/>
            <person name="Richardson P."/>
        </authorList>
    </citation>
    <scope>NUCLEOTIDE SEQUENCE [LARGE SCALE GENOMIC DNA]</scope>
    <source>
        <strain>ATCC 51168 / LMG 8142 / SP-6</strain>
    </source>
</reference>
<keyword id="KW-0488">Methylation</keyword>
<keyword id="KW-1185">Reference proteome</keyword>
<keyword id="KW-0687">Ribonucleoprotein</keyword>
<keyword id="KW-0689">Ribosomal protein</keyword>
<keyword id="KW-0694">RNA-binding</keyword>
<keyword id="KW-0699">rRNA-binding</keyword>
<keyword id="KW-0820">tRNA-binding</keyword>
<proteinExistence type="inferred from homology"/>
<feature type="chain" id="PRO_1000194186" description="Small ribosomal subunit protein uS12">
    <location>
        <begin position="1"/>
        <end position="125"/>
    </location>
</feature>
<feature type="region of interest" description="Disordered" evidence="3">
    <location>
        <begin position="104"/>
        <end position="125"/>
    </location>
</feature>
<feature type="compositionally biased region" description="Basic residues" evidence="3">
    <location>
        <begin position="113"/>
        <end position="125"/>
    </location>
</feature>
<feature type="modified residue" description="3-methylthioaspartic acid" evidence="1">
    <location>
        <position position="89"/>
    </location>
</feature>